<keyword id="KW-1185">Reference proteome</keyword>
<organismHost>
    <name type="scientific">Microplitis demolitor</name>
    <name type="common">Parasitoid wasp</name>
    <dbReference type="NCBI Taxonomy" id="69319"/>
</organismHost>
<feature type="chain" id="PRO_0000405381" description="Uncharacterized protein C3">
    <location>
        <begin position="1"/>
        <end position="129"/>
    </location>
</feature>
<feature type="region of interest" description="Disordered" evidence="1">
    <location>
        <begin position="85"/>
        <end position="110"/>
    </location>
</feature>
<feature type="compositionally biased region" description="Low complexity" evidence="1">
    <location>
        <begin position="85"/>
        <end position="108"/>
    </location>
</feature>
<sequence length="129" mass="14432">MVLNLIIPQEWNILPCATLQVELLRIIRAKKKSDLTSAGVVGYYNDVVAESMDFFDCLWFRKLEDTSKEPDFHRYSLMIVPMVPSSAADSDDSSSCSECDSDALLSDDGPCSTCDECHDSDRYELSSDC</sequence>
<dbReference type="EMBL" id="AY875681">
    <property type="protein sequence ID" value="AAW51772.1"/>
    <property type="molecule type" value="Genomic_DNA"/>
</dbReference>
<dbReference type="RefSeq" id="YP_239370.1">
    <property type="nucleotide sequence ID" value="NC_007031.1"/>
</dbReference>
<dbReference type="KEGG" id="vg:5075805"/>
<dbReference type="Proteomes" id="UP000008168">
    <property type="component" value="Genome"/>
</dbReference>
<gene>
    <name type="primary">C3</name>
</gene>
<proteinExistence type="predicted"/>
<evidence type="ECO:0000256" key="1">
    <source>
        <dbReference type="SAM" id="MobiDB-lite"/>
    </source>
</evidence>
<protein>
    <recommendedName>
        <fullName>Uncharacterized protein C3</fullName>
    </recommendedName>
</protein>
<accession>Q5I158</accession>
<reference key="1">
    <citation type="journal article" date="2006" name="Virology">
        <title>Polydnavirus genomes reflect their dual roles as mutualists and pathogens.</title>
        <authorList>
            <person name="Webb B.A."/>
            <person name="Strand M.R."/>
            <person name="Dickey S.E."/>
            <person name="Beck M.H."/>
            <person name="Hilgarth R.S."/>
            <person name="Barney W.E."/>
            <person name="Kadash K."/>
            <person name="Kroemer J.A."/>
            <person name="Lindstrom K.G."/>
            <person name="Rattanadechakul W."/>
            <person name="Shelby K.S."/>
            <person name="Thoetkiattikul H."/>
            <person name="Turnbull M.W."/>
            <person name="Witherell R.A."/>
        </authorList>
    </citation>
    <scope>NUCLEOTIDE SEQUENCE [GENOMIC DNA]</scope>
</reference>
<name>YC3_MDBVW</name>
<organism>
    <name type="scientific">Microplitis demolitor bracovirus (isolate Webb)</name>
    <name type="common">MdBV</name>
    <dbReference type="NCBI Taxonomy" id="654919"/>
    <lineage>
        <taxon>Viruses</taxon>
        <taxon>Viruses incertae sedis</taxon>
        <taxon>Polydnaviriformidae</taxon>
        <taxon>Bracoviriform</taxon>
        <taxon>Microplitis demolitor bracovirus</taxon>
    </lineage>
</organism>